<evidence type="ECO:0000305" key="1"/>
<feature type="chain" id="PRO_0000462460" description="Cysteine protease effector 1">
    <location>
        <begin position="1"/>
        <end position="479"/>
    </location>
</feature>
<name>CPE1_ECOU5</name>
<sequence length="479" mass="52186">MGNYHIGDGECRFRVVCSSPDVCEVGGYKVPFDSYQTLDSERQYSSTVWARGCRALNVGSVIAGTQSNAGKGVISGTSQGTGDCVILTGSPTVTIEGKPVAYHGSVVGINNHNCLGKLYTKIKSPMISVIDRTFNYERTAEVIHDLLLLKDLLSVGNIFDGDISPEVKNDLFQIKDPDQSWGEFFSIKNIRESLRNGIEGDKSQIREWFGENTLTQMGNGAITTLHGVADLALVTFDALLDTATATVACPIGEDGLCEQANINLNEKEQALFNISNSLINGQAWDALKKMIMDTNNGDQIALEHFASFLWGFMIPAKIPEENISGKVFVEPVVLEGGAGGNWTVFDEVLDSNVIKQLTLTGCGAACGEMLLRDRYIFVTQNVIGTELTSMTSLANKLNKFDVGWEGNAVSESSLYALSNTGSWGAMMWDSGSKVGHWVLVKGVDDAGNVIIYDPYQGSRYLMTEQEFKEVWNGHSVYKP</sequence>
<organism>
    <name type="scientific">Escherichia coli O1:K1:H7 (strain ATCC 11775 / DSM 30083 / JCM 1649 / NBRC 102203 / NCTC 9001 / U5/41)</name>
    <dbReference type="NCBI Taxonomy" id="866789"/>
    <lineage>
        <taxon>Bacteria</taxon>
        <taxon>Pseudomonadati</taxon>
        <taxon>Pseudomonadota</taxon>
        <taxon>Gammaproteobacteria</taxon>
        <taxon>Enterobacterales</taxon>
        <taxon>Enterobacteriaceae</taxon>
        <taxon>Escherichia</taxon>
    </lineage>
</organism>
<dbReference type="EMBL" id="CP033092">
    <property type="protein sequence ID" value="AYO72532.1"/>
    <property type="molecule type" value="Genomic_DNA"/>
</dbReference>
<protein>
    <recommendedName>
        <fullName evidence="1">Cysteine protease effector 1</fullName>
    </recommendedName>
</protein>
<accession>P0DXX9</accession>
<reference key="1">
    <citation type="journal article" date="2019" name="Microbiol. Resour. Announc.">
        <title>Complete Genome and Plasmid Sequences of Escherichia coli Type Strain ATCC 11775.</title>
        <authorList>
            <person name="Wadley T.D."/>
            <person name="Jenjaroenpun P."/>
            <person name="Wongsurawat T."/>
            <person name="Ussery D.W."/>
            <person name="Nookaew I."/>
        </authorList>
    </citation>
    <scope>NUCLEOTIDE SEQUENCE [LARGE SCALE GENOMIC DNA]</scope>
    <source>
        <strain>ATCC 11775 / DSM 30083 / JCM 1649 / NBRC 102203 / NCTC 9001 / U5/41</strain>
    </source>
</reference>
<gene>
    <name evidence="1" type="primary">cpe1</name>
    <name type="ORF">EAS44_10550</name>
</gene>
<proteinExistence type="predicted"/>